<organism>
    <name type="scientific">Burkholderia ambifaria (strain MC40-6)</name>
    <dbReference type="NCBI Taxonomy" id="398577"/>
    <lineage>
        <taxon>Bacteria</taxon>
        <taxon>Pseudomonadati</taxon>
        <taxon>Pseudomonadota</taxon>
        <taxon>Betaproteobacteria</taxon>
        <taxon>Burkholderiales</taxon>
        <taxon>Burkholderiaceae</taxon>
        <taxon>Burkholderia</taxon>
        <taxon>Burkholderia cepacia complex</taxon>
    </lineage>
</organism>
<protein>
    <recommendedName>
        <fullName evidence="1">Protein-export protein SecB</fullName>
    </recommendedName>
</protein>
<accession>B1YNA3</accession>
<proteinExistence type="inferred from homology"/>
<dbReference type="EMBL" id="CP001025">
    <property type="protein sequence ID" value="ACB65248.1"/>
    <property type="molecule type" value="Genomic_DNA"/>
</dbReference>
<dbReference type="RefSeq" id="WP_006752068.1">
    <property type="nucleotide sequence ID" value="NC_010551.1"/>
</dbReference>
<dbReference type="SMR" id="B1YNA3"/>
<dbReference type="KEGG" id="bac:BamMC406_2771"/>
<dbReference type="HOGENOM" id="CLU_111574_1_0_4"/>
<dbReference type="OrthoDB" id="9795145at2"/>
<dbReference type="Proteomes" id="UP000001680">
    <property type="component" value="Chromosome 1"/>
</dbReference>
<dbReference type="GO" id="GO:0005737">
    <property type="term" value="C:cytoplasm"/>
    <property type="evidence" value="ECO:0007669"/>
    <property type="project" value="UniProtKB-SubCell"/>
</dbReference>
<dbReference type="GO" id="GO:0051082">
    <property type="term" value="F:unfolded protein binding"/>
    <property type="evidence" value="ECO:0007669"/>
    <property type="project" value="InterPro"/>
</dbReference>
<dbReference type="GO" id="GO:0006457">
    <property type="term" value="P:protein folding"/>
    <property type="evidence" value="ECO:0007669"/>
    <property type="project" value="UniProtKB-UniRule"/>
</dbReference>
<dbReference type="GO" id="GO:0051262">
    <property type="term" value="P:protein tetramerization"/>
    <property type="evidence" value="ECO:0007669"/>
    <property type="project" value="InterPro"/>
</dbReference>
<dbReference type="GO" id="GO:0015031">
    <property type="term" value="P:protein transport"/>
    <property type="evidence" value="ECO:0007669"/>
    <property type="project" value="UniProtKB-UniRule"/>
</dbReference>
<dbReference type="Gene3D" id="3.10.420.10">
    <property type="entry name" value="SecB-like"/>
    <property type="match status" value="1"/>
</dbReference>
<dbReference type="HAMAP" id="MF_00821">
    <property type="entry name" value="SecB"/>
    <property type="match status" value="1"/>
</dbReference>
<dbReference type="InterPro" id="IPR003708">
    <property type="entry name" value="SecB"/>
</dbReference>
<dbReference type="InterPro" id="IPR035958">
    <property type="entry name" value="SecB-like_sf"/>
</dbReference>
<dbReference type="NCBIfam" id="NF004392">
    <property type="entry name" value="PRK05751.1-3"/>
    <property type="match status" value="1"/>
</dbReference>
<dbReference type="NCBIfam" id="NF004394">
    <property type="entry name" value="PRK05751.1-5"/>
    <property type="match status" value="1"/>
</dbReference>
<dbReference type="NCBIfam" id="TIGR00809">
    <property type="entry name" value="secB"/>
    <property type="match status" value="1"/>
</dbReference>
<dbReference type="PANTHER" id="PTHR36918">
    <property type="match status" value="1"/>
</dbReference>
<dbReference type="PANTHER" id="PTHR36918:SF1">
    <property type="entry name" value="PROTEIN-EXPORT PROTEIN SECB"/>
    <property type="match status" value="1"/>
</dbReference>
<dbReference type="Pfam" id="PF02556">
    <property type="entry name" value="SecB"/>
    <property type="match status" value="1"/>
</dbReference>
<dbReference type="PRINTS" id="PR01594">
    <property type="entry name" value="SECBCHAPRONE"/>
</dbReference>
<dbReference type="SUPFAM" id="SSF54611">
    <property type="entry name" value="SecB-like"/>
    <property type="match status" value="1"/>
</dbReference>
<sequence length="163" mass="17840">MSDVENQPFFNIQRVYLKDMSLEQPNSPAIFLEQDMPSVEVEVDVKAERLAESVFEVVVSGTVTAKVKDKVAFLIEAKQAGIFDIRNIPDEQLDPLVGIACPTILFPYLRSNIADAITRAGFPPIHLAEINFQALYEQRLAQLQQQAGAAGAPNGAPNGTTLN</sequence>
<name>SECB_BURA4</name>
<evidence type="ECO:0000255" key="1">
    <source>
        <dbReference type="HAMAP-Rule" id="MF_00821"/>
    </source>
</evidence>
<gene>
    <name evidence="1" type="primary">secB</name>
    <name type="ordered locus">BamMC406_2771</name>
</gene>
<keyword id="KW-0143">Chaperone</keyword>
<keyword id="KW-0963">Cytoplasm</keyword>
<keyword id="KW-0653">Protein transport</keyword>
<keyword id="KW-0811">Translocation</keyword>
<keyword id="KW-0813">Transport</keyword>
<feature type="chain" id="PRO_1000134365" description="Protein-export protein SecB">
    <location>
        <begin position="1"/>
        <end position="163"/>
    </location>
</feature>
<reference key="1">
    <citation type="submission" date="2008-04" db="EMBL/GenBank/DDBJ databases">
        <title>Complete sequence of chromosome 1 of Burkholderia ambifaria MC40-6.</title>
        <authorList>
            <person name="Copeland A."/>
            <person name="Lucas S."/>
            <person name="Lapidus A."/>
            <person name="Glavina del Rio T."/>
            <person name="Dalin E."/>
            <person name="Tice H."/>
            <person name="Pitluck S."/>
            <person name="Chain P."/>
            <person name="Malfatti S."/>
            <person name="Shin M."/>
            <person name="Vergez L."/>
            <person name="Lang D."/>
            <person name="Schmutz J."/>
            <person name="Larimer F."/>
            <person name="Land M."/>
            <person name="Hauser L."/>
            <person name="Kyrpides N."/>
            <person name="Lykidis A."/>
            <person name="Ramette A."/>
            <person name="Konstantinidis K."/>
            <person name="Tiedje J."/>
            <person name="Richardson P."/>
        </authorList>
    </citation>
    <scope>NUCLEOTIDE SEQUENCE [LARGE SCALE GENOMIC DNA]</scope>
    <source>
        <strain>MC40-6</strain>
    </source>
</reference>
<comment type="function">
    <text evidence="1">One of the proteins required for the normal export of preproteins out of the cell cytoplasm. It is a molecular chaperone that binds to a subset of precursor proteins, maintaining them in a translocation-competent state. It also specifically binds to its receptor SecA.</text>
</comment>
<comment type="subunit">
    <text evidence="1">Homotetramer, a dimer of dimers. One homotetramer interacts with 1 SecA dimer.</text>
</comment>
<comment type="subcellular location">
    <subcellularLocation>
        <location evidence="1">Cytoplasm</location>
    </subcellularLocation>
</comment>
<comment type="similarity">
    <text evidence="1">Belongs to the SecB family.</text>
</comment>